<protein>
    <recommendedName>
        <fullName>Putative alkaline ceramidase dcd3A</fullName>
        <ecNumber>3.5.1.-</ecNumber>
    </recommendedName>
</protein>
<organism>
    <name type="scientific">Dictyostelium discoideum</name>
    <name type="common">Social amoeba</name>
    <dbReference type="NCBI Taxonomy" id="44689"/>
    <lineage>
        <taxon>Eukaryota</taxon>
        <taxon>Amoebozoa</taxon>
        <taxon>Evosea</taxon>
        <taxon>Eumycetozoa</taxon>
        <taxon>Dictyostelia</taxon>
        <taxon>Dictyosteliales</taxon>
        <taxon>Dictyosteliaceae</taxon>
        <taxon>Dictyostelium</taxon>
    </lineage>
</organism>
<evidence type="ECO:0000255" key="1"/>
<evidence type="ECO:0000269" key="2">
    <source>
    </source>
</evidence>
<evidence type="ECO:0000305" key="3"/>
<dbReference type="EC" id="3.5.1.-"/>
<dbReference type="EMBL" id="AY392442">
    <property type="protein sequence ID" value="AAQ98884.1"/>
    <property type="molecule type" value="Genomic_DNA"/>
</dbReference>
<dbReference type="EMBL" id="AAFI02000111">
    <property type="protein sequence ID" value="EAL63276.1"/>
    <property type="molecule type" value="Genomic_DNA"/>
</dbReference>
<dbReference type="RefSeq" id="XP_636760.1">
    <property type="nucleotide sequence ID" value="XM_631668.1"/>
</dbReference>
<dbReference type="SMR" id="Q6TMJ1"/>
<dbReference type="FunCoup" id="Q6TMJ1">
    <property type="interactions" value="233"/>
</dbReference>
<dbReference type="STRING" id="44689.Q6TMJ1"/>
<dbReference type="GlyCosmos" id="Q6TMJ1">
    <property type="glycosylation" value="1 site, No reported glycans"/>
</dbReference>
<dbReference type="GlyGen" id="Q6TMJ1">
    <property type="glycosylation" value="2 sites"/>
</dbReference>
<dbReference type="PaxDb" id="44689-DDB0191395"/>
<dbReference type="EnsemblProtists" id="EAL63276">
    <property type="protein sequence ID" value="EAL63276"/>
    <property type="gene ID" value="DDB_G0288359"/>
</dbReference>
<dbReference type="GeneID" id="8626563"/>
<dbReference type="KEGG" id="ddi:DDB_G0288359"/>
<dbReference type="dictyBase" id="DDB_G0288359">
    <property type="gene designation" value="dcd3A"/>
</dbReference>
<dbReference type="VEuPathDB" id="AmoebaDB:DDB_G0288359"/>
<dbReference type="eggNOG" id="KOG2329">
    <property type="taxonomic scope" value="Eukaryota"/>
</dbReference>
<dbReference type="HOGENOM" id="CLU_063293_3_0_1"/>
<dbReference type="InParanoid" id="Q6TMJ1"/>
<dbReference type="OMA" id="SIDWCEL"/>
<dbReference type="PhylomeDB" id="Q6TMJ1"/>
<dbReference type="Reactome" id="R-DDI-9845614">
    <property type="pathway name" value="Sphingolipid catabolism"/>
</dbReference>
<dbReference type="PRO" id="PR:Q6TMJ1"/>
<dbReference type="Proteomes" id="UP000002195">
    <property type="component" value="Chromosome 5"/>
</dbReference>
<dbReference type="GO" id="GO:0005789">
    <property type="term" value="C:endoplasmic reticulum membrane"/>
    <property type="evidence" value="ECO:0000318"/>
    <property type="project" value="GO_Central"/>
</dbReference>
<dbReference type="GO" id="GO:0017040">
    <property type="term" value="F:N-acylsphingosine amidohydrolase activity"/>
    <property type="evidence" value="ECO:0000318"/>
    <property type="project" value="GO_Central"/>
</dbReference>
<dbReference type="GO" id="GO:0006672">
    <property type="term" value="P:ceramide metabolic process"/>
    <property type="evidence" value="ECO:0007669"/>
    <property type="project" value="InterPro"/>
</dbReference>
<dbReference type="InterPro" id="IPR008901">
    <property type="entry name" value="ACER"/>
</dbReference>
<dbReference type="PANTHER" id="PTHR46187">
    <property type="entry name" value="ALKALINE CERAMIDASE 3"/>
    <property type="match status" value="1"/>
</dbReference>
<dbReference type="PANTHER" id="PTHR46187:SF3">
    <property type="entry name" value="ALKALINE CERAMIDASE 3"/>
    <property type="match status" value="1"/>
</dbReference>
<dbReference type="Pfam" id="PF05875">
    <property type="entry name" value="Ceramidase"/>
    <property type="match status" value="1"/>
</dbReference>
<name>DCD3A_DICDI</name>
<keyword id="KW-0325">Glycoprotein</keyword>
<keyword id="KW-0378">Hydrolase</keyword>
<keyword id="KW-0472">Membrane</keyword>
<keyword id="KW-1185">Reference proteome</keyword>
<keyword id="KW-0812">Transmembrane</keyword>
<keyword id="KW-1133">Transmembrane helix</keyword>
<proteinExistence type="evidence at transcript level"/>
<sequence>MDYIENQGAYGTPTASIDWCELNYTYSPYIAEFYNTFSSLIISLFGIYGIWIMMPNFGTGVEKEHIKILKQLDVRNKVILSYISLIVVGVGSAFYHATLLYQNQLFDELPMIYTALIMLYIMVTVGEEKTKKGFKGGVLGNSLLRHLLPYLLIAYGLFVTITILVIQDQPKILQVSFGALVFYVVFHSIYLINKKKPDGMPSNPDSYLYKYAFVSMLVGFTCWVVERYFCKNGKTFGFQLHAFWHFFTGMSTYVWTQFLICKLLEAKHYCVGIKHTLGLPRIHAIKRF</sequence>
<comment type="subcellular location">
    <subcellularLocation>
        <location evidence="3">Membrane</location>
        <topology evidence="3">Multi-pass membrane protein</topology>
    </subcellularLocation>
</comment>
<comment type="developmental stage">
    <text evidence="2">Expressed early in development at low levels and up-regulated late in development. The high levels during culmination is dependent on srfA. The late induction after 24 hours of development was not observed in srfA-null strains.</text>
</comment>
<comment type="induction">
    <text evidence="2">Up-regulated by srfA transcription factor.</text>
</comment>
<comment type="similarity">
    <text evidence="3">Belongs to the alkaline ceramidase family.</text>
</comment>
<gene>
    <name type="primary">dcd3A</name>
    <name type="ORF">DDB_G0288359</name>
</gene>
<feature type="chain" id="PRO_0000390656" description="Putative alkaline ceramidase dcd3A">
    <location>
        <begin position="1"/>
        <end position="288"/>
    </location>
</feature>
<feature type="transmembrane region" description="Helical" evidence="1">
    <location>
        <begin position="41"/>
        <end position="61"/>
    </location>
</feature>
<feature type="transmembrane region" description="Helical" evidence="1">
    <location>
        <begin position="78"/>
        <end position="98"/>
    </location>
</feature>
<feature type="transmembrane region" description="Helical" evidence="1">
    <location>
        <begin position="105"/>
        <end position="125"/>
    </location>
</feature>
<feature type="transmembrane region" description="Helical" evidence="1">
    <location>
        <begin position="146"/>
        <end position="166"/>
    </location>
</feature>
<feature type="transmembrane region" description="Helical" evidence="1">
    <location>
        <begin position="172"/>
        <end position="192"/>
    </location>
</feature>
<feature type="transmembrane region" description="Helical" evidence="1">
    <location>
        <begin position="206"/>
        <end position="226"/>
    </location>
</feature>
<feature type="transmembrane region" description="Helical" evidence="1">
    <location>
        <begin position="240"/>
        <end position="260"/>
    </location>
</feature>
<feature type="glycosylation site" description="N-linked (GlcNAc...) asparagine" evidence="1">
    <location>
        <position position="23"/>
    </location>
</feature>
<reference key="1">
    <citation type="journal article" date="2004" name="Eukaryot. Cell">
        <title>Identification of genes dependent on the MADS box transcription factor SrfA in Dictyostelium discoideum development.</title>
        <authorList>
            <person name="Escalante R."/>
            <person name="Iranfar N."/>
            <person name="Sastre L."/>
            <person name="Loomis W.F."/>
        </authorList>
    </citation>
    <scope>NUCLEOTIDE SEQUENCE [GENOMIC DNA]</scope>
    <scope>DEVELOPMENTAL STAGE</scope>
    <scope>INDUCTION BY SRFA</scope>
</reference>
<reference key="2">
    <citation type="journal article" date="2005" name="Nature">
        <title>The genome of the social amoeba Dictyostelium discoideum.</title>
        <authorList>
            <person name="Eichinger L."/>
            <person name="Pachebat J.A."/>
            <person name="Gloeckner G."/>
            <person name="Rajandream M.A."/>
            <person name="Sucgang R."/>
            <person name="Berriman M."/>
            <person name="Song J."/>
            <person name="Olsen R."/>
            <person name="Szafranski K."/>
            <person name="Xu Q."/>
            <person name="Tunggal B."/>
            <person name="Kummerfeld S."/>
            <person name="Madera M."/>
            <person name="Konfortov B.A."/>
            <person name="Rivero F."/>
            <person name="Bankier A.T."/>
            <person name="Lehmann R."/>
            <person name="Hamlin N."/>
            <person name="Davies R."/>
            <person name="Gaudet P."/>
            <person name="Fey P."/>
            <person name="Pilcher K."/>
            <person name="Chen G."/>
            <person name="Saunders D."/>
            <person name="Sodergren E.J."/>
            <person name="Davis P."/>
            <person name="Kerhornou A."/>
            <person name="Nie X."/>
            <person name="Hall N."/>
            <person name="Anjard C."/>
            <person name="Hemphill L."/>
            <person name="Bason N."/>
            <person name="Farbrother P."/>
            <person name="Desany B."/>
            <person name="Just E."/>
            <person name="Morio T."/>
            <person name="Rost R."/>
            <person name="Churcher C.M."/>
            <person name="Cooper J."/>
            <person name="Haydock S."/>
            <person name="van Driessche N."/>
            <person name="Cronin A."/>
            <person name="Goodhead I."/>
            <person name="Muzny D.M."/>
            <person name="Mourier T."/>
            <person name="Pain A."/>
            <person name="Lu M."/>
            <person name="Harper D."/>
            <person name="Lindsay R."/>
            <person name="Hauser H."/>
            <person name="James K.D."/>
            <person name="Quiles M."/>
            <person name="Madan Babu M."/>
            <person name="Saito T."/>
            <person name="Buchrieser C."/>
            <person name="Wardroper A."/>
            <person name="Felder M."/>
            <person name="Thangavelu M."/>
            <person name="Johnson D."/>
            <person name="Knights A."/>
            <person name="Loulseged H."/>
            <person name="Mungall K.L."/>
            <person name="Oliver K."/>
            <person name="Price C."/>
            <person name="Quail M.A."/>
            <person name="Urushihara H."/>
            <person name="Hernandez J."/>
            <person name="Rabbinowitsch E."/>
            <person name="Steffen D."/>
            <person name="Sanders M."/>
            <person name="Ma J."/>
            <person name="Kohara Y."/>
            <person name="Sharp S."/>
            <person name="Simmonds M.N."/>
            <person name="Spiegler S."/>
            <person name="Tivey A."/>
            <person name="Sugano S."/>
            <person name="White B."/>
            <person name="Walker D."/>
            <person name="Woodward J.R."/>
            <person name="Winckler T."/>
            <person name="Tanaka Y."/>
            <person name="Shaulsky G."/>
            <person name="Schleicher M."/>
            <person name="Weinstock G.M."/>
            <person name="Rosenthal A."/>
            <person name="Cox E.C."/>
            <person name="Chisholm R.L."/>
            <person name="Gibbs R.A."/>
            <person name="Loomis W.F."/>
            <person name="Platzer M."/>
            <person name="Kay R.R."/>
            <person name="Williams J.G."/>
            <person name="Dear P.H."/>
            <person name="Noegel A.A."/>
            <person name="Barrell B.G."/>
            <person name="Kuspa A."/>
        </authorList>
    </citation>
    <scope>NUCLEOTIDE SEQUENCE [LARGE SCALE GENOMIC DNA]</scope>
    <source>
        <strain>AX4</strain>
    </source>
</reference>
<accession>Q6TMJ1</accession>
<accession>Q54J41</accession>